<accession>Q5R5N6</accession>
<accession>Q5R8A1</accession>
<feature type="signal peptide" evidence="1">
    <location>
        <begin position="1"/>
        <end position="22"/>
    </location>
</feature>
<feature type="chain" id="PRO_0000231039" description="Beta-glucuronidase">
    <location>
        <begin position="23"/>
        <end position="651"/>
    </location>
</feature>
<feature type="active site" description="Proton donor" evidence="1">
    <location>
        <position position="451"/>
    </location>
</feature>
<feature type="glycosylation site" description="N-linked (GlcNAc...) asparagine" evidence="2">
    <location>
        <position position="173"/>
    </location>
</feature>
<feature type="glycosylation site" description="N-linked (GlcNAc...) asparagine" evidence="2">
    <location>
        <position position="190"/>
    </location>
</feature>
<feature type="glycosylation site" description="N-linked (GlcNAc...) asparagine" evidence="2">
    <location>
        <position position="272"/>
    </location>
</feature>
<feature type="glycosylation site" description="N-linked (GlcNAc...) asparagine" evidence="2">
    <location>
        <position position="420"/>
    </location>
</feature>
<feature type="glycosylation site" description="N-linked (GlcNAc...) asparagine" evidence="2">
    <location>
        <position position="631"/>
    </location>
</feature>
<feature type="sequence conflict" description="In Ref. 1; CAH92009." evidence="3" ref="1">
    <original>G</original>
    <variation>R</variation>
    <location>
        <position position="4"/>
    </location>
</feature>
<feature type="sequence conflict" description="In Ref. 1; CAH92930." evidence="3" ref="1">
    <original>R</original>
    <variation>Q</variation>
    <location>
        <position position="69"/>
    </location>
</feature>
<feature type="sequence conflict" description="In Ref. 1; CAH92009." evidence="3" ref="1">
    <original>F</original>
    <variation>I</variation>
    <location>
        <position position="370"/>
    </location>
</feature>
<feature type="sequence conflict" description="In Ref. 1; CAH92930." evidence="3" ref="1">
    <original>E</original>
    <variation>G</variation>
    <location>
        <position position="406"/>
    </location>
</feature>
<feature type="sequence conflict" description="In Ref. 1; CAH92009." evidence="3" ref="1">
    <original>G</original>
    <variation>D</variation>
    <location>
        <position position="460"/>
    </location>
</feature>
<keyword id="KW-0325">Glycoprotein</keyword>
<keyword id="KW-0326">Glycosidase</keyword>
<keyword id="KW-0378">Hydrolase</keyword>
<keyword id="KW-0458">Lysosome</keyword>
<keyword id="KW-1185">Reference proteome</keyword>
<keyword id="KW-0732">Signal</keyword>
<proteinExistence type="evidence at transcript level"/>
<evidence type="ECO:0000250" key="1"/>
<evidence type="ECO:0000255" key="2"/>
<evidence type="ECO:0000305" key="3"/>
<organism>
    <name type="scientific">Pongo abelii</name>
    <name type="common">Sumatran orangutan</name>
    <name type="synonym">Pongo pygmaeus abelii</name>
    <dbReference type="NCBI Taxonomy" id="9601"/>
    <lineage>
        <taxon>Eukaryota</taxon>
        <taxon>Metazoa</taxon>
        <taxon>Chordata</taxon>
        <taxon>Craniata</taxon>
        <taxon>Vertebrata</taxon>
        <taxon>Euteleostomi</taxon>
        <taxon>Mammalia</taxon>
        <taxon>Eutheria</taxon>
        <taxon>Euarchontoglires</taxon>
        <taxon>Primates</taxon>
        <taxon>Haplorrhini</taxon>
        <taxon>Catarrhini</taxon>
        <taxon>Hominidae</taxon>
        <taxon>Pongo</taxon>
    </lineage>
</organism>
<comment type="function">
    <text evidence="1">Plays an important role in the degradation of dermatan and keratan sulfates.</text>
</comment>
<comment type="catalytic activity">
    <reaction>
        <text>a beta-D-glucuronoside + H2O = D-glucuronate + an alcohol</text>
        <dbReference type="Rhea" id="RHEA:17633"/>
        <dbReference type="ChEBI" id="CHEBI:15377"/>
        <dbReference type="ChEBI" id="CHEBI:30879"/>
        <dbReference type="ChEBI" id="CHEBI:58720"/>
        <dbReference type="ChEBI" id="CHEBI:83411"/>
        <dbReference type="EC" id="3.2.1.31"/>
    </reaction>
</comment>
<comment type="activity regulation">
    <text evidence="1">Inhibited by L-aspartic acid.</text>
</comment>
<comment type="subunit">
    <text evidence="1">Homotetramer.</text>
</comment>
<comment type="subcellular location">
    <subcellularLocation>
        <location evidence="1">Lysosome</location>
    </subcellularLocation>
</comment>
<comment type="similarity">
    <text evidence="3">Belongs to the glycosyl hydrolase 2 family.</text>
</comment>
<reference key="1">
    <citation type="submission" date="2004-11" db="EMBL/GenBank/DDBJ databases">
        <authorList>
            <consortium name="The German cDNA consortium"/>
        </authorList>
    </citation>
    <scope>NUCLEOTIDE SEQUENCE [LARGE SCALE MRNA]</scope>
    <source>
        <tissue>Brain cortex</tissue>
        <tissue>Kidney</tissue>
    </source>
</reference>
<sequence>MARGSAVAWAAFGPLLWGCALGLQGGMLYPQESRSRERKELDGLWSFRADFSDNRRRGFEEQWYRRPLRESGPTLDMPVPSSFNDISQDWRLRHFVGWVWYEREVILPERWTQDLHTRVVLRIGSAHSYAIVWVNGVDTLEHEGGYLPFEADISNLVQVGPLPSRLRITIAINNTLTPTTLPPGTIQYMNDTSKYPKGYFVQNTYFDFFNYAGLQRSVLLYTTPTTYIDDITVTTGVEQDSGLVNYQISVKGSNLFELEARLLDAENKVVANGTGTQGQLKVPGASLWWPYLMHERPAYLYSLEVRLTAQTSLGPVSDFYSLPVGIRTVAVTESQFLINGKPFYFHGVNKHEDADIRGKGFDWPLLVKDFNLLRWLGANAFRTSHYPYAEEVLQMCDRHGIVVIDECPGVGLALPQFFNNVSLHHHMRVMEEVVRRDKNHPAVVMWSVANEPASHLESAGYYLKMVIAHTKALDPSRPVTFVSNSNYAADKGAPYVDVICLNSYYSWYHDYGHLELIQLQLATQFENWYKKYQKPIIQSEYGAETIAGFHQDPPLMFTEEYQKSLLEQYHLGLDQKRRKYVVGELIWNFADFMTEQSLTRVLGNKKGIFTRQRQPKSAAFLLRERYWKIANETRYPHSVAKSQCLENSPFT</sequence>
<gene>
    <name type="primary">GUSB</name>
</gene>
<protein>
    <recommendedName>
        <fullName>Beta-glucuronidase</fullName>
        <ecNumber>3.2.1.31</ecNumber>
    </recommendedName>
</protein>
<dbReference type="EC" id="3.2.1.31"/>
<dbReference type="EMBL" id="CR859852">
    <property type="protein sequence ID" value="CAH92009.1"/>
    <property type="molecule type" value="mRNA"/>
</dbReference>
<dbReference type="EMBL" id="CR860821">
    <property type="protein sequence ID" value="CAH92930.1"/>
    <property type="molecule type" value="mRNA"/>
</dbReference>
<dbReference type="RefSeq" id="NP_001126724.1">
    <property type="nucleotide sequence ID" value="NM_001133252.1"/>
</dbReference>
<dbReference type="RefSeq" id="NP_001128846.1">
    <property type="nucleotide sequence ID" value="NM_001135374.1"/>
</dbReference>
<dbReference type="SMR" id="Q5R5N6"/>
<dbReference type="FunCoup" id="Q5R5N6">
    <property type="interactions" value="933"/>
</dbReference>
<dbReference type="STRING" id="9601.ENSPPYP00000019644"/>
<dbReference type="CAZy" id="GH2">
    <property type="family name" value="Glycoside Hydrolase Family 2"/>
</dbReference>
<dbReference type="GlyCosmos" id="Q5R5N6">
    <property type="glycosylation" value="5 sites, No reported glycans"/>
</dbReference>
<dbReference type="GeneID" id="100173726"/>
<dbReference type="KEGG" id="pon:100173726"/>
<dbReference type="CTD" id="2990"/>
<dbReference type="eggNOG" id="KOG2024">
    <property type="taxonomic scope" value="Eukaryota"/>
</dbReference>
<dbReference type="InParanoid" id="Q5R5N6"/>
<dbReference type="OrthoDB" id="408532at2759"/>
<dbReference type="Proteomes" id="UP000001595">
    <property type="component" value="Unplaced"/>
</dbReference>
<dbReference type="GO" id="GO:0005615">
    <property type="term" value="C:extracellular space"/>
    <property type="evidence" value="ECO:0007669"/>
    <property type="project" value="TreeGrafter"/>
</dbReference>
<dbReference type="GO" id="GO:0005764">
    <property type="term" value="C:lysosome"/>
    <property type="evidence" value="ECO:0007669"/>
    <property type="project" value="UniProtKB-SubCell"/>
</dbReference>
<dbReference type="GO" id="GO:0004566">
    <property type="term" value="F:beta-glucuronidase activity"/>
    <property type="evidence" value="ECO:0007669"/>
    <property type="project" value="UniProtKB-EC"/>
</dbReference>
<dbReference type="GO" id="GO:0030246">
    <property type="term" value="F:carbohydrate binding"/>
    <property type="evidence" value="ECO:0007669"/>
    <property type="project" value="TreeGrafter"/>
</dbReference>
<dbReference type="GO" id="GO:0005102">
    <property type="term" value="F:signaling receptor binding"/>
    <property type="evidence" value="ECO:0007669"/>
    <property type="project" value="TreeGrafter"/>
</dbReference>
<dbReference type="GO" id="GO:0005975">
    <property type="term" value="P:carbohydrate metabolic process"/>
    <property type="evidence" value="ECO:0007669"/>
    <property type="project" value="InterPro"/>
</dbReference>
<dbReference type="GO" id="GO:0019391">
    <property type="term" value="P:glucuronoside catabolic process"/>
    <property type="evidence" value="ECO:0007669"/>
    <property type="project" value="TreeGrafter"/>
</dbReference>
<dbReference type="FunFam" id="2.60.120.260:FF:000027">
    <property type="entry name" value="Beta-glucuronidase"/>
    <property type="match status" value="1"/>
</dbReference>
<dbReference type="FunFam" id="2.60.40.10:FF:000628">
    <property type="entry name" value="Beta-glucuronidase"/>
    <property type="match status" value="1"/>
</dbReference>
<dbReference type="FunFam" id="3.20.20.80:FF:000029">
    <property type="entry name" value="Beta-glucuronidase"/>
    <property type="match status" value="1"/>
</dbReference>
<dbReference type="Gene3D" id="2.60.120.260">
    <property type="entry name" value="Galactose-binding domain-like"/>
    <property type="match status" value="1"/>
</dbReference>
<dbReference type="Gene3D" id="3.20.20.80">
    <property type="entry name" value="Glycosidases"/>
    <property type="match status" value="1"/>
</dbReference>
<dbReference type="Gene3D" id="2.60.40.10">
    <property type="entry name" value="Immunoglobulins"/>
    <property type="match status" value="1"/>
</dbReference>
<dbReference type="InterPro" id="IPR036156">
    <property type="entry name" value="Beta-gal/glucu_dom_sf"/>
</dbReference>
<dbReference type="InterPro" id="IPR008979">
    <property type="entry name" value="Galactose-bd-like_sf"/>
</dbReference>
<dbReference type="InterPro" id="IPR006101">
    <property type="entry name" value="Glyco_hydro_2"/>
</dbReference>
<dbReference type="InterPro" id="IPR023232">
    <property type="entry name" value="Glyco_hydro_2_AS"/>
</dbReference>
<dbReference type="InterPro" id="IPR006103">
    <property type="entry name" value="Glyco_hydro_2_cat"/>
</dbReference>
<dbReference type="InterPro" id="IPR023230">
    <property type="entry name" value="Glyco_hydro_2_CS"/>
</dbReference>
<dbReference type="InterPro" id="IPR006102">
    <property type="entry name" value="Glyco_hydro_2_Ig-like"/>
</dbReference>
<dbReference type="InterPro" id="IPR006104">
    <property type="entry name" value="Glyco_hydro_2_N"/>
</dbReference>
<dbReference type="InterPro" id="IPR017853">
    <property type="entry name" value="Glycoside_hydrolase_SF"/>
</dbReference>
<dbReference type="InterPro" id="IPR013783">
    <property type="entry name" value="Ig-like_fold"/>
</dbReference>
<dbReference type="NCBIfam" id="NF007538">
    <property type="entry name" value="PRK10150.1"/>
    <property type="match status" value="1"/>
</dbReference>
<dbReference type="PANTHER" id="PTHR10066">
    <property type="entry name" value="BETA-GLUCURONIDASE"/>
    <property type="match status" value="1"/>
</dbReference>
<dbReference type="PANTHER" id="PTHR10066:SF67">
    <property type="entry name" value="BETA-GLUCURONIDASE"/>
    <property type="match status" value="1"/>
</dbReference>
<dbReference type="Pfam" id="PF00703">
    <property type="entry name" value="Glyco_hydro_2"/>
    <property type="match status" value="1"/>
</dbReference>
<dbReference type="Pfam" id="PF02836">
    <property type="entry name" value="Glyco_hydro_2_C"/>
    <property type="match status" value="1"/>
</dbReference>
<dbReference type="Pfam" id="PF02837">
    <property type="entry name" value="Glyco_hydro_2_N"/>
    <property type="match status" value="1"/>
</dbReference>
<dbReference type="PRINTS" id="PR00132">
    <property type="entry name" value="GLHYDRLASE2"/>
</dbReference>
<dbReference type="SUPFAM" id="SSF51445">
    <property type="entry name" value="(Trans)glycosidases"/>
    <property type="match status" value="1"/>
</dbReference>
<dbReference type="SUPFAM" id="SSF49303">
    <property type="entry name" value="beta-Galactosidase/glucuronidase domain"/>
    <property type="match status" value="1"/>
</dbReference>
<dbReference type="SUPFAM" id="SSF49785">
    <property type="entry name" value="Galactose-binding domain-like"/>
    <property type="match status" value="1"/>
</dbReference>
<dbReference type="PROSITE" id="PS00719">
    <property type="entry name" value="GLYCOSYL_HYDROL_F2_1"/>
    <property type="match status" value="1"/>
</dbReference>
<dbReference type="PROSITE" id="PS00608">
    <property type="entry name" value="GLYCOSYL_HYDROL_F2_2"/>
    <property type="match status" value="1"/>
</dbReference>
<name>BGLR_PONAB</name>